<protein>
    <recommendedName>
        <fullName evidence="1">DNA-directed RNA polymerase subunit omega</fullName>
        <shortName evidence="1">RNAP omega subunit</shortName>
        <ecNumber evidence="1">2.7.7.6</ecNumber>
    </recommendedName>
    <alternativeName>
        <fullName evidence="1">RNA polymerase omega subunit</fullName>
    </alternativeName>
    <alternativeName>
        <fullName evidence="1">Transcriptase subunit omega</fullName>
    </alternativeName>
</protein>
<comment type="function">
    <text evidence="1">Promotes RNA polymerase assembly. Latches the N- and C-terminal regions of the beta' subunit thereby facilitating its interaction with the beta and alpha subunits.</text>
</comment>
<comment type="catalytic activity">
    <reaction evidence="1">
        <text>RNA(n) + a ribonucleoside 5'-triphosphate = RNA(n+1) + diphosphate</text>
        <dbReference type="Rhea" id="RHEA:21248"/>
        <dbReference type="Rhea" id="RHEA-COMP:14527"/>
        <dbReference type="Rhea" id="RHEA-COMP:17342"/>
        <dbReference type="ChEBI" id="CHEBI:33019"/>
        <dbReference type="ChEBI" id="CHEBI:61557"/>
        <dbReference type="ChEBI" id="CHEBI:140395"/>
        <dbReference type="EC" id="2.7.7.6"/>
    </reaction>
</comment>
<comment type="subunit">
    <text evidence="1">The RNAP catalytic core consists of 2 alpha, 1 beta, 1 beta' and 1 omega subunit. When a sigma factor is associated with the core the holoenzyme is formed, which can initiate transcription.</text>
</comment>
<comment type="similarity">
    <text evidence="1">Belongs to the RNA polymerase subunit omega family.</text>
</comment>
<sequence>MARITTEDCTGKISNHFDLTLVAARRARQLENGNTPLVDDVRNNKPTVTALREIAAGHIGTELLTRNK</sequence>
<keyword id="KW-0240">DNA-directed RNA polymerase</keyword>
<keyword id="KW-0548">Nucleotidyltransferase</keyword>
<keyword id="KW-0804">Transcription</keyword>
<keyword id="KW-0808">Transferase</keyword>
<evidence type="ECO:0000255" key="1">
    <source>
        <dbReference type="HAMAP-Rule" id="MF_00366"/>
    </source>
</evidence>
<dbReference type="EC" id="2.7.7.6" evidence="1"/>
<dbReference type="EMBL" id="CP001050">
    <property type="protein sequence ID" value="ACF30187.1"/>
    <property type="molecule type" value="Genomic_DNA"/>
</dbReference>
<dbReference type="RefSeq" id="WP_002212665.1">
    <property type="nucleotide sequence ID" value="NC_011035.1"/>
</dbReference>
<dbReference type="SMR" id="B4RN20"/>
<dbReference type="GeneID" id="93387665"/>
<dbReference type="KEGG" id="ngk:NGK_1530"/>
<dbReference type="HOGENOM" id="CLU_125406_5_2_4"/>
<dbReference type="Proteomes" id="UP000002564">
    <property type="component" value="Chromosome"/>
</dbReference>
<dbReference type="GO" id="GO:0000428">
    <property type="term" value="C:DNA-directed RNA polymerase complex"/>
    <property type="evidence" value="ECO:0007669"/>
    <property type="project" value="UniProtKB-KW"/>
</dbReference>
<dbReference type="GO" id="GO:0003677">
    <property type="term" value="F:DNA binding"/>
    <property type="evidence" value="ECO:0007669"/>
    <property type="project" value="UniProtKB-UniRule"/>
</dbReference>
<dbReference type="GO" id="GO:0003899">
    <property type="term" value="F:DNA-directed RNA polymerase activity"/>
    <property type="evidence" value="ECO:0007669"/>
    <property type="project" value="UniProtKB-UniRule"/>
</dbReference>
<dbReference type="GO" id="GO:0006351">
    <property type="term" value="P:DNA-templated transcription"/>
    <property type="evidence" value="ECO:0007669"/>
    <property type="project" value="UniProtKB-UniRule"/>
</dbReference>
<dbReference type="Gene3D" id="3.90.940.10">
    <property type="match status" value="1"/>
</dbReference>
<dbReference type="HAMAP" id="MF_00366">
    <property type="entry name" value="RNApol_bact_RpoZ"/>
    <property type="match status" value="1"/>
</dbReference>
<dbReference type="InterPro" id="IPR003716">
    <property type="entry name" value="DNA-dir_RNA_pol_omega"/>
</dbReference>
<dbReference type="InterPro" id="IPR006110">
    <property type="entry name" value="Pol_omega/Rpo6/RPB6"/>
</dbReference>
<dbReference type="InterPro" id="IPR036161">
    <property type="entry name" value="RPB6/omega-like_sf"/>
</dbReference>
<dbReference type="NCBIfam" id="TIGR00690">
    <property type="entry name" value="rpoZ"/>
    <property type="match status" value="1"/>
</dbReference>
<dbReference type="PANTHER" id="PTHR34476">
    <property type="entry name" value="DNA-DIRECTED RNA POLYMERASE SUBUNIT OMEGA"/>
    <property type="match status" value="1"/>
</dbReference>
<dbReference type="PANTHER" id="PTHR34476:SF1">
    <property type="entry name" value="DNA-DIRECTED RNA POLYMERASE SUBUNIT OMEGA"/>
    <property type="match status" value="1"/>
</dbReference>
<dbReference type="Pfam" id="PF01192">
    <property type="entry name" value="RNA_pol_Rpb6"/>
    <property type="match status" value="1"/>
</dbReference>
<dbReference type="SMART" id="SM01409">
    <property type="entry name" value="RNA_pol_Rpb6"/>
    <property type="match status" value="1"/>
</dbReference>
<dbReference type="SUPFAM" id="SSF63562">
    <property type="entry name" value="RPB6/omega subunit-like"/>
    <property type="match status" value="1"/>
</dbReference>
<organism>
    <name type="scientific">Neisseria gonorrhoeae (strain NCCP11945)</name>
    <dbReference type="NCBI Taxonomy" id="521006"/>
    <lineage>
        <taxon>Bacteria</taxon>
        <taxon>Pseudomonadati</taxon>
        <taxon>Pseudomonadota</taxon>
        <taxon>Betaproteobacteria</taxon>
        <taxon>Neisseriales</taxon>
        <taxon>Neisseriaceae</taxon>
        <taxon>Neisseria</taxon>
    </lineage>
</organism>
<gene>
    <name evidence="1" type="primary">rpoZ</name>
    <name type="ordered locus">NGK_1530</name>
</gene>
<proteinExistence type="inferred from homology"/>
<name>RPOZ_NEIG2</name>
<feature type="chain" id="PRO_1000121248" description="DNA-directed RNA polymerase subunit omega">
    <location>
        <begin position="1"/>
        <end position="68"/>
    </location>
</feature>
<accession>B4RN20</accession>
<reference key="1">
    <citation type="journal article" date="2008" name="J. Bacteriol.">
        <title>Complete genome sequence of Neisseria gonorrhoeae NCCP11945.</title>
        <authorList>
            <person name="Chung G.T."/>
            <person name="Yoo J.S."/>
            <person name="Oh H.B."/>
            <person name="Lee Y.S."/>
            <person name="Cha S.H."/>
            <person name="Kim S.J."/>
            <person name="Yoo C.K."/>
        </authorList>
    </citation>
    <scope>NUCLEOTIDE SEQUENCE [LARGE SCALE GENOMIC DNA]</scope>
    <source>
        <strain>NCCP11945</strain>
    </source>
</reference>